<reference key="1">
    <citation type="journal article" date="2009" name="PLoS Genet.">
        <title>Organised genome dynamics in the Escherichia coli species results in highly diverse adaptive paths.</title>
        <authorList>
            <person name="Touchon M."/>
            <person name="Hoede C."/>
            <person name="Tenaillon O."/>
            <person name="Barbe V."/>
            <person name="Baeriswyl S."/>
            <person name="Bidet P."/>
            <person name="Bingen E."/>
            <person name="Bonacorsi S."/>
            <person name="Bouchier C."/>
            <person name="Bouvet O."/>
            <person name="Calteau A."/>
            <person name="Chiapello H."/>
            <person name="Clermont O."/>
            <person name="Cruveiller S."/>
            <person name="Danchin A."/>
            <person name="Diard M."/>
            <person name="Dossat C."/>
            <person name="Karoui M.E."/>
            <person name="Frapy E."/>
            <person name="Garry L."/>
            <person name="Ghigo J.M."/>
            <person name="Gilles A.M."/>
            <person name="Johnson J."/>
            <person name="Le Bouguenec C."/>
            <person name="Lescat M."/>
            <person name="Mangenot S."/>
            <person name="Martinez-Jehanne V."/>
            <person name="Matic I."/>
            <person name="Nassif X."/>
            <person name="Oztas S."/>
            <person name="Petit M.A."/>
            <person name="Pichon C."/>
            <person name="Rouy Z."/>
            <person name="Ruf C.S."/>
            <person name="Schneider D."/>
            <person name="Tourret J."/>
            <person name="Vacherie B."/>
            <person name="Vallenet D."/>
            <person name="Medigue C."/>
            <person name="Rocha E.P.C."/>
            <person name="Denamur E."/>
        </authorList>
    </citation>
    <scope>NUCLEOTIDE SEQUENCE [LARGE SCALE GENOMIC DNA]</scope>
    <source>
        <strain>S88 / ExPEC</strain>
    </source>
</reference>
<proteinExistence type="inferred from homology"/>
<feature type="chain" id="PRO_1000121429" description="Large ribosomal subunit protein bL12">
    <location>
        <begin position="1"/>
        <end position="121"/>
    </location>
</feature>
<comment type="function">
    <text evidence="1">Forms part of the ribosomal stalk which helps the ribosome interact with GTP-bound translation factors. Is thus essential for accurate translation.</text>
</comment>
<comment type="subunit">
    <text evidence="1">Homodimer. Part of the ribosomal stalk of the 50S ribosomal subunit. Forms a multimeric L10(L12)X complex, where L10 forms an elongated spine to which 2 to 4 L12 dimers bind in a sequential fashion. Binds GTP-bound translation factors.</text>
</comment>
<comment type="similarity">
    <text evidence="1">Belongs to the bacterial ribosomal protein bL12 family.</text>
</comment>
<accession>B7MIX2</accession>
<organism>
    <name type="scientific">Escherichia coli O45:K1 (strain S88 / ExPEC)</name>
    <dbReference type="NCBI Taxonomy" id="585035"/>
    <lineage>
        <taxon>Bacteria</taxon>
        <taxon>Pseudomonadati</taxon>
        <taxon>Pseudomonadota</taxon>
        <taxon>Gammaproteobacteria</taxon>
        <taxon>Enterobacterales</taxon>
        <taxon>Enterobacteriaceae</taxon>
        <taxon>Escherichia</taxon>
    </lineage>
</organism>
<evidence type="ECO:0000255" key="1">
    <source>
        <dbReference type="HAMAP-Rule" id="MF_00368"/>
    </source>
</evidence>
<evidence type="ECO:0000305" key="2"/>
<gene>
    <name evidence="1" type="primary">rplL</name>
    <name type="ordered locus">ECS88_4447</name>
</gene>
<name>RL7_ECO45</name>
<sequence>MSITKDQIIEAVAAMSVMDVVELISAMEEKFGVSAAAAVAVAAGPVEAAEEKTEFDVILKAAGANKVAVIKAVRGATGLGLKEAKDLVESAPAALKEGVSKDDAEALKKALEEAGAEVEVK</sequence>
<dbReference type="EMBL" id="CU928161">
    <property type="protein sequence ID" value="CAR05616.1"/>
    <property type="molecule type" value="Genomic_DNA"/>
</dbReference>
<dbReference type="RefSeq" id="WP_000028878.1">
    <property type="nucleotide sequence ID" value="NC_011742.1"/>
</dbReference>
<dbReference type="SMR" id="B7MIX2"/>
<dbReference type="GeneID" id="86944525"/>
<dbReference type="KEGG" id="ecz:ECS88_4447"/>
<dbReference type="HOGENOM" id="CLU_086499_3_2_6"/>
<dbReference type="Proteomes" id="UP000000747">
    <property type="component" value="Chromosome"/>
</dbReference>
<dbReference type="GO" id="GO:0022625">
    <property type="term" value="C:cytosolic large ribosomal subunit"/>
    <property type="evidence" value="ECO:0007669"/>
    <property type="project" value="TreeGrafter"/>
</dbReference>
<dbReference type="GO" id="GO:0003729">
    <property type="term" value="F:mRNA binding"/>
    <property type="evidence" value="ECO:0007669"/>
    <property type="project" value="TreeGrafter"/>
</dbReference>
<dbReference type="GO" id="GO:0003735">
    <property type="term" value="F:structural constituent of ribosome"/>
    <property type="evidence" value="ECO:0007669"/>
    <property type="project" value="InterPro"/>
</dbReference>
<dbReference type="GO" id="GO:0006412">
    <property type="term" value="P:translation"/>
    <property type="evidence" value="ECO:0007669"/>
    <property type="project" value="UniProtKB-UniRule"/>
</dbReference>
<dbReference type="CDD" id="cd00387">
    <property type="entry name" value="Ribosomal_L7_L12"/>
    <property type="match status" value="1"/>
</dbReference>
<dbReference type="FunFam" id="1.20.5.710:FF:000001">
    <property type="entry name" value="50S ribosomal protein L7/L12"/>
    <property type="match status" value="1"/>
</dbReference>
<dbReference type="FunFam" id="3.30.1390.10:FF:000001">
    <property type="entry name" value="50S ribosomal protein L7/L12"/>
    <property type="match status" value="1"/>
</dbReference>
<dbReference type="Gene3D" id="3.30.1390.10">
    <property type="match status" value="1"/>
</dbReference>
<dbReference type="Gene3D" id="1.20.5.710">
    <property type="entry name" value="Single helix bin"/>
    <property type="match status" value="1"/>
</dbReference>
<dbReference type="HAMAP" id="MF_00368">
    <property type="entry name" value="Ribosomal_bL12"/>
    <property type="match status" value="1"/>
</dbReference>
<dbReference type="InterPro" id="IPR000206">
    <property type="entry name" value="Ribosomal_bL12"/>
</dbReference>
<dbReference type="InterPro" id="IPR013823">
    <property type="entry name" value="Ribosomal_bL12_C"/>
</dbReference>
<dbReference type="InterPro" id="IPR014719">
    <property type="entry name" value="Ribosomal_bL12_C/ClpS-like"/>
</dbReference>
<dbReference type="InterPro" id="IPR008932">
    <property type="entry name" value="Ribosomal_bL12_oligo"/>
</dbReference>
<dbReference type="InterPro" id="IPR036235">
    <property type="entry name" value="Ribosomal_bL12_oligo_N_sf"/>
</dbReference>
<dbReference type="NCBIfam" id="TIGR00855">
    <property type="entry name" value="L12"/>
    <property type="match status" value="1"/>
</dbReference>
<dbReference type="PANTHER" id="PTHR45987">
    <property type="entry name" value="39S RIBOSOMAL PROTEIN L12"/>
    <property type="match status" value="1"/>
</dbReference>
<dbReference type="PANTHER" id="PTHR45987:SF4">
    <property type="entry name" value="LARGE RIBOSOMAL SUBUNIT PROTEIN BL12M"/>
    <property type="match status" value="1"/>
</dbReference>
<dbReference type="Pfam" id="PF00542">
    <property type="entry name" value="Ribosomal_L12"/>
    <property type="match status" value="1"/>
</dbReference>
<dbReference type="Pfam" id="PF16320">
    <property type="entry name" value="Ribosomal_L12_N"/>
    <property type="match status" value="1"/>
</dbReference>
<dbReference type="SUPFAM" id="SSF54736">
    <property type="entry name" value="ClpS-like"/>
    <property type="match status" value="1"/>
</dbReference>
<dbReference type="SUPFAM" id="SSF48300">
    <property type="entry name" value="Ribosomal protein L7/12, oligomerisation (N-terminal) domain"/>
    <property type="match status" value="1"/>
</dbReference>
<protein>
    <recommendedName>
        <fullName evidence="1">Large ribosomal subunit protein bL12</fullName>
    </recommendedName>
    <alternativeName>
        <fullName evidence="2">50S ribosomal protein L7/L12</fullName>
    </alternativeName>
</protein>
<keyword id="KW-1185">Reference proteome</keyword>
<keyword id="KW-0687">Ribonucleoprotein</keyword>
<keyword id="KW-0689">Ribosomal protein</keyword>